<accession>Q9H5J4</accession>
<accession>Q4W5L0</accession>
<accession>Q8NCD1</accession>
<sequence length="265" mass="31376">MNMSVLTLQEYEFEKQFNENEAIQWMQENWKKSFLFSALYAAFIFGGRHLMNKRAKFELRKPLVLWSLTLAVFSIFGALRTGAYMVYILMTKGLKQSVCDQGFYNGPVSKFWAYAFVLSKAPELGDTIFIILRKQKLIFLHWYHHITVLLYSWYSYKDMVAGGGWFMTMNYGVHAVMYSYYALRAAGFRVSRKFAMFITLSQITQMLMGCVVNYLVFCWMQHDQCHSHFQNIFWSSLMYLSYLVLFCHFFFEAYIGKMRKTTKAE</sequence>
<organism>
    <name type="scientific">Homo sapiens</name>
    <name type="common">Human</name>
    <dbReference type="NCBI Taxonomy" id="9606"/>
    <lineage>
        <taxon>Eukaryota</taxon>
        <taxon>Metazoa</taxon>
        <taxon>Chordata</taxon>
        <taxon>Craniata</taxon>
        <taxon>Vertebrata</taxon>
        <taxon>Euteleostomi</taxon>
        <taxon>Mammalia</taxon>
        <taxon>Eutheria</taxon>
        <taxon>Euarchontoglires</taxon>
        <taxon>Primates</taxon>
        <taxon>Haplorrhini</taxon>
        <taxon>Catarrhini</taxon>
        <taxon>Hominidae</taxon>
        <taxon>Homo</taxon>
    </lineage>
</organism>
<proteinExistence type="evidence at protein level"/>
<dbReference type="EC" id="2.3.1.199" evidence="2 3 4 5"/>
<dbReference type="EMBL" id="AK074813">
    <property type="protein sequence ID" value="BAC11225.1"/>
    <property type="status" value="ALT_INIT"/>
    <property type="molecule type" value="mRNA"/>
</dbReference>
<dbReference type="EMBL" id="AK027031">
    <property type="protein sequence ID" value="BAB15632.1"/>
    <property type="molecule type" value="mRNA"/>
</dbReference>
<dbReference type="EMBL" id="AC004050">
    <property type="status" value="NOT_ANNOTATED_CDS"/>
    <property type="molecule type" value="Genomic_DNA"/>
</dbReference>
<dbReference type="EMBL" id="AC093770">
    <property type="protein sequence ID" value="AAY40928.1"/>
    <property type="molecule type" value="Genomic_DNA"/>
</dbReference>
<dbReference type="EMBL" id="BC001305">
    <property type="protein sequence ID" value="AAH01305.1"/>
    <property type="molecule type" value="mRNA"/>
</dbReference>
<dbReference type="CCDS" id="CCDS3690.1"/>
<dbReference type="RefSeq" id="NP_001124193.1">
    <property type="nucleotide sequence ID" value="NM_001130721.2"/>
</dbReference>
<dbReference type="RefSeq" id="NP_076995.1">
    <property type="nucleotide sequence ID" value="NM_024090.3"/>
</dbReference>
<dbReference type="RefSeq" id="XP_011530535.1">
    <property type="nucleotide sequence ID" value="XM_011532233.4"/>
</dbReference>
<dbReference type="RefSeq" id="XP_011530536.1">
    <property type="nucleotide sequence ID" value="XM_011532234.4"/>
</dbReference>
<dbReference type="RefSeq" id="XP_054206791.1">
    <property type="nucleotide sequence ID" value="XM_054350816.1"/>
</dbReference>
<dbReference type="RefSeq" id="XP_054206792.1">
    <property type="nucleotide sequence ID" value="XM_054350817.1"/>
</dbReference>
<dbReference type="SMR" id="Q9H5J4"/>
<dbReference type="BioGRID" id="122522">
    <property type="interactions" value="8"/>
</dbReference>
<dbReference type="FunCoup" id="Q9H5J4">
    <property type="interactions" value="1060"/>
</dbReference>
<dbReference type="IntAct" id="Q9H5J4">
    <property type="interactions" value="6"/>
</dbReference>
<dbReference type="STRING" id="9606.ENSP00000378105"/>
<dbReference type="BindingDB" id="Q9H5J4"/>
<dbReference type="ChEMBL" id="CHEMBL5704"/>
<dbReference type="SwissLipids" id="SLP:000000254"/>
<dbReference type="GlyCosmos" id="Q9H5J4">
    <property type="glycosylation" value="2 sites, 1 glycan"/>
</dbReference>
<dbReference type="GlyGen" id="Q9H5J4">
    <property type="glycosylation" value="2 sites, 1 N-linked glycan (1 site), 1 O-linked glycan (1 site)"/>
</dbReference>
<dbReference type="iPTMnet" id="Q9H5J4"/>
<dbReference type="PhosphoSitePlus" id="Q9H5J4"/>
<dbReference type="BioMuta" id="ELOVL6"/>
<dbReference type="DMDM" id="74733585"/>
<dbReference type="jPOST" id="Q9H5J4"/>
<dbReference type="MassIVE" id="Q9H5J4"/>
<dbReference type="PaxDb" id="9606-ENSP00000378105"/>
<dbReference type="PeptideAtlas" id="Q9H5J4"/>
<dbReference type="ProteomicsDB" id="80915"/>
<dbReference type="Antibodypedia" id="26395">
    <property type="antibodies" value="196 antibodies from 34 providers"/>
</dbReference>
<dbReference type="DNASU" id="79071"/>
<dbReference type="Ensembl" id="ENST00000302274.8">
    <property type="protein sequence ID" value="ENSP00000304736.3"/>
    <property type="gene ID" value="ENSG00000170522.10"/>
</dbReference>
<dbReference type="Ensembl" id="ENST00000394607.7">
    <property type="protein sequence ID" value="ENSP00000378105.3"/>
    <property type="gene ID" value="ENSG00000170522.10"/>
</dbReference>
<dbReference type="GeneID" id="79071"/>
<dbReference type="KEGG" id="hsa:79071"/>
<dbReference type="MANE-Select" id="ENST00000302274.8">
    <property type="protein sequence ID" value="ENSP00000304736.3"/>
    <property type="RefSeq nucleotide sequence ID" value="NM_024090.3"/>
    <property type="RefSeq protein sequence ID" value="NP_076995.1"/>
</dbReference>
<dbReference type="UCSC" id="uc003hzz.4">
    <property type="organism name" value="human"/>
</dbReference>
<dbReference type="AGR" id="HGNC:15829"/>
<dbReference type="CTD" id="79071"/>
<dbReference type="DisGeNET" id="79071"/>
<dbReference type="GeneCards" id="ELOVL6"/>
<dbReference type="HGNC" id="HGNC:15829">
    <property type="gene designation" value="ELOVL6"/>
</dbReference>
<dbReference type="HPA" id="ENSG00000170522">
    <property type="expression patterns" value="Tissue enhanced (liver)"/>
</dbReference>
<dbReference type="MIM" id="611546">
    <property type="type" value="gene"/>
</dbReference>
<dbReference type="neXtProt" id="NX_Q9H5J4"/>
<dbReference type="OpenTargets" id="ENSG00000170522"/>
<dbReference type="PharmGKB" id="PA134939058"/>
<dbReference type="VEuPathDB" id="HostDB:ENSG00000170522"/>
<dbReference type="eggNOG" id="KOG3072">
    <property type="taxonomic scope" value="Eukaryota"/>
</dbReference>
<dbReference type="GeneTree" id="ENSGT01050000244965"/>
<dbReference type="HOGENOM" id="CLU_048483_1_1_1"/>
<dbReference type="InParanoid" id="Q9H5J4"/>
<dbReference type="OMA" id="PISWVPI"/>
<dbReference type="OrthoDB" id="10259681at2759"/>
<dbReference type="PAN-GO" id="Q9H5J4">
    <property type="GO annotations" value="7 GO annotations based on evolutionary models"/>
</dbReference>
<dbReference type="PhylomeDB" id="Q9H5J4"/>
<dbReference type="TreeFam" id="TF106467"/>
<dbReference type="BioCyc" id="MetaCyc:HS10142-MONOMER"/>
<dbReference type="BRENDA" id="2.3.1.16">
    <property type="organism ID" value="2681"/>
</dbReference>
<dbReference type="BRENDA" id="2.3.1.199">
    <property type="organism ID" value="2681"/>
</dbReference>
<dbReference type="PathwayCommons" id="Q9H5J4"/>
<dbReference type="Reactome" id="R-HSA-2426168">
    <property type="pathway name" value="Activation of gene expression by SREBF (SREBP)"/>
</dbReference>
<dbReference type="Reactome" id="R-HSA-75876">
    <property type="pathway name" value="Synthesis of very long-chain fatty acyl-CoAs"/>
</dbReference>
<dbReference type="SignaLink" id="Q9H5J4"/>
<dbReference type="SIGNOR" id="Q9H5J4"/>
<dbReference type="UniPathway" id="UPA00094"/>
<dbReference type="BioGRID-ORCS" id="79071">
    <property type="hits" value="13 hits in 1159 CRISPR screens"/>
</dbReference>
<dbReference type="GenomeRNAi" id="79071"/>
<dbReference type="Pharos" id="Q9H5J4">
    <property type="development level" value="Tchem"/>
</dbReference>
<dbReference type="PRO" id="PR:Q9H5J4"/>
<dbReference type="Proteomes" id="UP000005640">
    <property type="component" value="Chromosome 4"/>
</dbReference>
<dbReference type="RNAct" id="Q9H5J4">
    <property type="molecule type" value="protein"/>
</dbReference>
<dbReference type="Bgee" id="ENSG00000170522">
    <property type="expression patterns" value="Expressed in right lobe of liver and 164 other cell types or tissues"/>
</dbReference>
<dbReference type="ExpressionAtlas" id="Q9H5J4">
    <property type="expression patterns" value="baseline and differential"/>
</dbReference>
<dbReference type="GO" id="GO:0005783">
    <property type="term" value="C:endoplasmic reticulum"/>
    <property type="evidence" value="ECO:0000314"/>
    <property type="project" value="UniProtKB"/>
</dbReference>
<dbReference type="GO" id="GO:0005789">
    <property type="term" value="C:endoplasmic reticulum membrane"/>
    <property type="evidence" value="ECO:0000318"/>
    <property type="project" value="GO_Central"/>
</dbReference>
<dbReference type="GO" id="GO:0009923">
    <property type="term" value="C:fatty acid elongase complex"/>
    <property type="evidence" value="ECO:0000314"/>
    <property type="project" value="UniProtKB"/>
</dbReference>
<dbReference type="GO" id="GO:0009922">
    <property type="term" value="F:fatty acid elongase activity"/>
    <property type="evidence" value="ECO:0000315"/>
    <property type="project" value="UniProtKB"/>
</dbReference>
<dbReference type="GO" id="GO:0034625">
    <property type="term" value="P:fatty acid elongation, monounsaturated fatty acid"/>
    <property type="evidence" value="ECO:0000318"/>
    <property type="project" value="GO_Central"/>
</dbReference>
<dbReference type="GO" id="GO:0034626">
    <property type="term" value="P:fatty acid elongation, polyunsaturated fatty acid"/>
    <property type="evidence" value="ECO:0000318"/>
    <property type="project" value="GO_Central"/>
</dbReference>
<dbReference type="GO" id="GO:0019367">
    <property type="term" value="P:fatty acid elongation, saturated fatty acid"/>
    <property type="evidence" value="ECO:0000314"/>
    <property type="project" value="UniProtKB"/>
</dbReference>
<dbReference type="GO" id="GO:0042759">
    <property type="term" value="P:long-chain fatty acid biosynthetic process"/>
    <property type="evidence" value="ECO:0000314"/>
    <property type="project" value="UniProtKB"/>
</dbReference>
<dbReference type="GO" id="GO:0035338">
    <property type="term" value="P:long-chain fatty-acyl-CoA biosynthetic process"/>
    <property type="evidence" value="ECO:0000304"/>
    <property type="project" value="Reactome"/>
</dbReference>
<dbReference type="GO" id="GO:0120162">
    <property type="term" value="P:positive regulation of cold-induced thermogenesis"/>
    <property type="evidence" value="ECO:0000250"/>
    <property type="project" value="YuBioLab"/>
</dbReference>
<dbReference type="GO" id="GO:0030148">
    <property type="term" value="P:sphingolipid biosynthetic process"/>
    <property type="evidence" value="ECO:0000318"/>
    <property type="project" value="GO_Central"/>
</dbReference>
<dbReference type="GO" id="GO:0006636">
    <property type="term" value="P:unsaturated fatty acid biosynthetic process"/>
    <property type="evidence" value="ECO:0007669"/>
    <property type="project" value="UniProtKB-UniRule"/>
</dbReference>
<dbReference type="GO" id="GO:0042761">
    <property type="term" value="P:very long-chain fatty acid biosynthetic process"/>
    <property type="evidence" value="ECO:0000318"/>
    <property type="project" value="GO_Central"/>
</dbReference>
<dbReference type="HAMAP" id="MF_03206">
    <property type="entry name" value="VLCF_elongase_6"/>
    <property type="match status" value="1"/>
</dbReference>
<dbReference type="InterPro" id="IPR030457">
    <property type="entry name" value="ELO_CS"/>
</dbReference>
<dbReference type="InterPro" id="IPR002076">
    <property type="entry name" value="ELO_fam"/>
</dbReference>
<dbReference type="InterPro" id="IPR033675">
    <property type="entry name" value="ELOVL6"/>
</dbReference>
<dbReference type="PANTHER" id="PTHR11157:SF125">
    <property type="entry name" value="ELONGATION OF VERY LONG CHAIN FATTY ACIDS PROTEIN 6"/>
    <property type="match status" value="1"/>
</dbReference>
<dbReference type="PANTHER" id="PTHR11157">
    <property type="entry name" value="FATTY ACID ACYL TRANSFERASE-RELATED"/>
    <property type="match status" value="1"/>
</dbReference>
<dbReference type="Pfam" id="PF01151">
    <property type="entry name" value="ELO"/>
    <property type="match status" value="1"/>
</dbReference>
<dbReference type="PROSITE" id="PS01188">
    <property type="entry name" value="ELO"/>
    <property type="match status" value="1"/>
</dbReference>
<gene>
    <name evidence="2" type="primary">ELOVL6</name>
    <name type="synonym">FACE</name>
    <name type="synonym">LCE</name>
</gene>
<name>ELOV6_HUMAN</name>
<protein>
    <recommendedName>
        <fullName evidence="2">Very long chain fatty acid elongase 6</fullName>
        <ecNumber evidence="2 3 4 5">2.3.1.199</ecNumber>
    </recommendedName>
    <alternativeName>
        <fullName evidence="2">3-keto acyl-CoA synthase ELOVL6</fullName>
    </alternativeName>
    <alternativeName>
        <fullName evidence="2">ELOVL fatty acid elongase 6</fullName>
        <shortName evidence="2">ELOVL FA elongase 6</shortName>
    </alternativeName>
    <alternativeName>
        <fullName evidence="2">Elongation of very long chain fatty acids protein 6</fullName>
    </alternativeName>
    <alternativeName>
        <fullName>Fatty acid elongase 2</fullName>
        <shortName>hELO2</shortName>
    </alternativeName>
    <alternativeName>
        <fullName>Fatty acyl-CoA elongase</fullName>
    </alternativeName>
    <alternativeName>
        <fullName>Long-chain fatty-acyl elongase</fullName>
    </alternativeName>
    <alternativeName>
        <fullName evidence="2">Very long chain 3-ketoacyl-CoA synthase 6</fullName>
    </alternativeName>
    <alternativeName>
        <fullName evidence="2">Very long chain 3-oxoacyl-CoA synthase 6</fullName>
    </alternativeName>
</protein>
<evidence type="ECO:0000250" key="1">
    <source>
        <dbReference type="UniProtKB" id="Q920L5"/>
    </source>
</evidence>
<evidence type="ECO:0000255" key="2">
    <source>
        <dbReference type="HAMAP-Rule" id="MF_03206"/>
    </source>
</evidence>
<evidence type="ECO:0000269" key="3">
    <source>
    </source>
</evidence>
<evidence type="ECO:0000269" key="4">
    <source>
    </source>
</evidence>
<evidence type="ECO:0000269" key="5">
    <source>
    </source>
</evidence>
<evidence type="ECO:0000269" key="6">
    <source>
    </source>
</evidence>
<evidence type="ECO:0000305" key="7"/>
<evidence type="ECO:0000305" key="8">
    <source>
    </source>
</evidence>
<evidence type="ECO:0000305" key="9">
    <source>
    </source>
</evidence>
<reference key="1">
    <citation type="journal article" date="2004" name="Nat. Genet.">
        <title>Complete sequencing and characterization of 21,243 full-length human cDNAs.</title>
        <authorList>
            <person name="Ota T."/>
            <person name="Suzuki Y."/>
            <person name="Nishikawa T."/>
            <person name="Otsuki T."/>
            <person name="Sugiyama T."/>
            <person name="Irie R."/>
            <person name="Wakamatsu A."/>
            <person name="Hayashi K."/>
            <person name="Sato H."/>
            <person name="Nagai K."/>
            <person name="Kimura K."/>
            <person name="Makita H."/>
            <person name="Sekine M."/>
            <person name="Obayashi M."/>
            <person name="Nishi T."/>
            <person name="Shibahara T."/>
            <person name="Tanaka T."/>
            <person name="Ishii S."/>
            <person name="Yamamoto J."/>
            <person name="Saito K."/>
            <person name="Kawai Y."/>
            <person name="Isono Y."/>
            <person name="Nakamura Y."/>
            <person name="Nagahari K."/>
            <person name="Murakami K."/>
            <person name="Yasuda T."/>
            <person name="Iwayanagi T."/>
            <person name="Wagatsuma M."/>
            <person name="Shiratori A."/>
            <person name="Sudo H."/>
            <person name="Hosoiri T."/>
            <person name="Kaku Y."/>
            <person name="Kodaira H."/>
            <person name="Kondo H."/>
            <person name="Sugawara M."/>
            <person name="Takahashi M."/>
            <person name="Kanda K."/>
            <person name="Yokoi T."/>
            <person name="Furuya T."/>
            <person name="Kikkawa E."/>
            <person name="Omura Y."/>
            <person name="Abe K."/>
            <person name="Kamihara K."/>
            <person name="Katsuta N."/>
            <person name="Sato K."/>
            <person name="Tanikawa M."/>
            <person name="Yamazaki M."/>
            <person name="Ninomiya K."/>
            <person name="Ishibashi T."/>
            <person name="Yamashita H."/>
            <person name="Murakawa K."/>
            <person name="Fujimori K."/>
            <person name="Tanai H."/>
            <person name="Kimata M."/>
            <person name="Watanabe M."/>
            <person name="Hiraoka S."/>
            <person name="Chiba Y."/>
            <person name="Ishida S."/>
            <person name="Ono Y."/>
            <person name="Takiguchi S."/>
            <person name="Watanabe S."/>
            <person name="Yosida M."/>
            <person name="Hotuta T."/>
            <person name="Kusano J."/>
            <person name="Kanehori K."/>
            <person name="Takahashi-Fujii A."/>
            <person name="Hara H."/>
            <person name="Tanase T.-O."/>
            <person name="Nomura Y."/>
            <person name="Togiya S."/>
            <person name="Komai F."/>
            <person name="Hara R."/>
            <person name="Takeuchi K."/>
            <person name="Arita M."/>
            <person name="Imose N."/>
            <person name="Musashino K."/>
            <person name="Yuuki H."/>
            <person name="Oshima A."/>
            <person name="Sasaki N."/>
            <person name="Aotsuka S."/>
            <person name="Yoshikawa Y."/>
            <person name="Matsunawa H."/>
            <person name="Ichihara T."/>
            <person name="Shiohata N."/>
            <person name="Sano S."/>
            <person name="Moriya S."/>
            <person name="Momiyama H."/>
            <person name="Satoh N."/>
            <person name="Takami S."/>
            <person name="Terashima Y."/>
            <person name="Suzuki O."/>
            <person name="Nakagawa S."/>
            <person name="Senoh A."/>
            <person name="Mizoguchi H."/>
            <person name="Goto Y."/>
            <person name="Shimizu F."/>
            <person name="Wakebe H."/>
            <person name="Hishigaki H."/>
            <person name="Watanabe T."/>
            <person name="Sugiyama A."/>
            <person name="Takemoto M."/>
            <person name="Kawakami B."/>
            <person name="Yamazaki M."/>
            <person name="Watanabe K."/>
            <person name="Kumagai A."/>
            <person name="Itakura S."/>
            <person name="Fukuzumi Y."/>
            <person name="Fujimori Y."/>
            <person name="Komiyama M."/>
            <person name="Tashiro H."/>
            <person name="Tanigami A."/>
            <person name="Fujiwara T."/>
            <person name="Ono T."/>
            <person name="Yamada K."/>
            <person name="Fujii Y."/>
            <person name="Ozaki K."/>
            <person name="Hirao M."/>
            <person name="Ohmori Y."/>
            <person name="Kawabata A."/>
            <person name="Hikiji T."/>
            <person name="Kobatake N."/>
            <person name="Inagaki H."/>
            <person name="Ikema Y."/>
            <person name="Okamoto S."/>
            <person name="Okitani R."/>
            <person name="Kawakami T."/>
            <person name="Noguchi S."/>
            <person name="Itoh T."/>
            <person name="Shigeta K."/>
            <person name="Senba T."/>
            <person name="Matsumura K."/>
            <person name="Nakajima Y."/>
            <person name="Mizuno T."/>
            <person name="Morinaga M."/>
            <person name="Sasaki M."/>
            <person name="Togashi T."/>
            <person name="Oyama M."/>
            <person name="Hata H."/>
            <person name="Watanabe M."/>
            <person name="Komatsu T."/>
            <person name="Mizushima-Sugano J."/>
            <person name="Satoh T."/>
            <person name="Shirai Y."/>
            <person name="Takahashi Y."/>
            <person name="Nakagawa K."/>
            <person name="Okumura K."/>
            <person name="Nagase T."/>
            <person name="Nomura N."/>
            <person name="Kikuchi H."/>
            <person name="Masuho Y."/>
            <person name="Yamashita R."/>
            <person name="Nakai K."/>
            <person name="Yada T."/>
            <person name="Nakamura Y."/>
            <person name="Ohara O."/>
            <person name="Isogai T."/>
            <person name="Sugano S."/>
        </authorList>
    </citation>
    <scope>NUCLEOTIDE SEQUENCE [LARGE SCALE MRNA]</scope>
</reference>
<reference key="2">
    <citation type="journal article" date="2005" name="Nature">
        <title>Generation and annotation of the DNA sequences of human chromosomes 2 and 4.</title>
        <authorList>
            <person name="Hillier L.W."/>
            <person name="Graves T.A."/>
            <person name="Fulton R.S."/>
            <person name="Fulton L.A."/>
            <person name="Pepin K.H."/>
            <person name="Minx P."/>
            <person name="Wagner-McPherson C."/>
            <person name="Layman D."/>
            <person name="Wylie K."/>
            <person name="Sekhon M."/>
            <person name="Becker M.C."/>
            <person name="Fewell G.A."/>
            <person name="Delehaunty K.D."/>
            <person name="Miner T.L."/>
            <person name="Nash W.E."/>
            <person name="Kremitzki C."/>
            <person name="Oddy L."/>
            <person name="Du H."/>
            <person name="Sun H."/>
            <person name="Bradshaw-Cordum H."/>
            <person name="Ali J."/>
            <person name="Carter J."/>
            <person name="Cordes M."/>
            <person name="Harris A."/>
            <person name="Isak A."/>
            <person name="van Brunt A."/>
            <person name="Nguyen C."/>
            <person name="Du F."/>
            <person name="Courtney L."/>
            <person name="Kalicki J."/>
            <person name="Ozersky P."/>
            <person name="Abbott S."/>
            <person name="Armstrong J."/>
            <person name="Belter E.A."/>
            <person name="Caruso L."/>
            <person name="Cedroni M."/>
            <person name="Cotton M."/>
            <person name="Davidson T."/>
            <person name="Desai A."/>
            <person name="Elliott G."/>
            <person name="Erb T."/>
            <person name="Fronick C."/>
            <person name="Gaige T."/>
            <person name="Haakenson W."/>
            <person name="Haglund K."/>
            <person name="Holmes A."/>
            <person name="Harkins R."/>
            <person name="Kim K."/>
            <person name="Kruchowski S.S."/>
            <person name="Strong C.M."/>
            <person name="Grewal N."/>
            <person name="Goyea E."/>
            <person name="Hou S."/>
            <person name="Levy A."/>
            <person name="Martinka S."/>
            <person name="Mead K."/>
            <person name="McLellan M.D."/>
            <person name="Meyer R."/>
            <person name="Randall-Maher J."/>
            <person name="Tomlinson C."/>
            <person name="Dauphin-Kohlberg S."/>
            <person name="Kozlowicz-Reilly A."/>
            <person name="Shah N."/>
            <person name="Swearengen-Shahid S."/>
            <person name="Snider J."/>
            <person name="Strong J.T."/>
            <person name="Thompson J."/>
            <person name="Yoakum M."/>
            <person name="Leonard S."/>
            <person name="Pearman C."/>
            <person name="Trani L."/>
            <person name="Radionenko M."/>
            <person name="Waligorski J.E."/>
            <person name="Wang C."/>
            <person name="Rock S.M."/>
            <person name="Tin-Wollam A.-M."/>
            <person name="Maupin R."/>
            <person name="Latreille P."/>
            <person name="Wendl M.C."/>
            <person name="Yang S.-P."/>
            <person name="Pohl C."/>
            <person name="Wallis J.W."/>
            <person name="Spieth J."/>
            <person name="Bieri T.A."/>
            <person name="Berkowicz N."/>
            <person name="Nelson J.O."/>
            <person name="Osborne J."/>
            <person name="Ding L."/>
            <person name="Meyer R."/>
            <person name="Sabo A."/>
            <person name="Shotland Y."/>
            <person name="Sinha P."/>
            <person name="Wohldmann P.E."/>
            <person name="Cook L.L."/>
            <person name="Hickenbotham M.T."/>
            <person name="Eldred J."/>
            <person name="Williams D."/>
            <person name="Jones T.A."/>
            <person name="She X."/>
            <person name="Ciccarelli F.D."/>
            <person name="Izaurralde E."/>
            <person name="Taylor J."/>
            <person name="Schmutz J."/>
            <person name="Myers R.M."/>
            <person name="Cox D.R."/>
            <person name="Huang X."/>
            <person name="McPherson J.D."/>
            <person name="Mardis E.R."/>
            <person name="Clifton S.W."/>
            <person name="Warren W.C."/>
            <person name="Chinwalla A.T."/>
            <person name="Eddy S.R."/>
            <person name="Marra M.A."/>
            <person name="Ovcharenko I."/>
            <person name="Furey T.S."/>
            <person name="Miller W."/>
            <person name="Eichler E.E."/>
            <person name="Bork P."/>
            <person name="Suyama M."/>
            <person name="Torrents D."/>
            <person name="Waterston R.H."/>
            <person name="Wilson R.K."/>
        </authorList>
    </citation>
    <scope>NUCLEOTIDE SEQUENCE [LARGE SCALE GENOMIC DNA]</scope>
</reference>
<reference key="3">
    <citation type="journal article" date="2004" name="Genome Res.">
        <title>The status, quality, and expansion of the NIH full-length cDNA project: the Mammalian Gene Collection (MGC).</title>
        <authorList>
            <consortium name="The MGC Project Team"/>
        </authorList>
    </citation>
    <scope>NUCLEOTIDE SEQUENCE [LARGE SCALE MRNA]</scope>
    <source>
        <tissue>Placenta</tissue>
    </source>
</reference>
<reference key="4">
    <citation type="journal article" date="2009" name="Lipids">
        <title>Development of a high-density assay for long-chain fatty acyl-CoA elongases.</title>
        <authorList>
            <person name="Kitazawa H."/>
            <person name="Miyamoto Y."/>
            <person name="Shimamura K."/>
            <person name="Nagumo A."/>
            <person name="Tokita S."/>
        </authorList>
    </citation>
    <scope>FUNCTION</scope>
    <scope>CATALYTIC ACTIVITY</scope>
</reference>
<reference key="5">
    <citation type="journal article" date="2010" name="Proc. Natl. Acad. Sci. U.S.A.">
        <title>ELOVL1 production of C24 acyl-CoAs is linked to C24 sphingolipid synthesis.</title>
        <authorList>
            <person name="Ohno Y."/>
            <person name="Suto S."/>
            <person name="Yamanaka M."/>
            <person name="Mizutani Y."/>
            <person name="Mitsutake S."/>
            <person name="Igarashi Y."/>
            <person name="Sassa T."/>
            <person name="Kihara A."/>
        </authorList>
    </citation>
    <scope>FUNCTION</scope>
    <scope>CATALYTIC ACTIVITY</scope>
    <scope>PATHWAY</scope>
    <scope>SUBCELLULAR LOCATION</scope>
    <scope>GLYCOSYLATION</scope>
    <scope>TISSUE SPECIFICITY</scope>
</reference>
<reference key="6">
    <citation type="journal article" date="2014" name="PLoS ONE">
        <title>Two modes of regulation of the fatty acid elongase ELOVL6 by the 3-ketoacyl-CoA reductase KAR in the fatty acid elongation cycle.</title>
        <authorList>
            <person name="Naganuma T."/>
            <person name="Kihara A."/>
        </authorList>
    </citation>
    <scope>FUNCTION</scope>
    <scope>CATALYTIC ACTIVITY</scope>
    <scope>ACTIVITY REGULATION</scope>
    <scope>BIOPHYSICOCHEMICAL PROPERTIES</scope>
    <scope>GLYCOSYLATION</scope>
</reference>
<reference key="7">
    <citation type="journal article" date="2015" name="Nature">
        <title>Regulation of mitochondrial morphology and function by stearoylation of TFR1.</title>
        <authorList>
            <person name="Senyilmaz D."/>
            <person name="Virtue S."/>
            <person name="Xu X."/>
            <person name="Tan C.Y."/>
            <person name="Griffin J.L."/>
            <person name="Miller A.K."/>
            <person name="Vidal-Puig A."/>
            <person name="Teleman A.A."/>
        </authorList>
    </citation>
    <scope>FUNCTION</scope>
</reference>
<comment type="function">
    <text evidence="2 3 4 5 6">Catalyzes the first and rate-limiting reaction of the four reactions that constitute the long-chain fatty acids elongation cycle. This endoplasmic reticulum-bound enzymatic process allows the addition of 2 carbons to the chain of long- and very long-chain fatty acids (VLCFAs) per cycle. Condensing enzyme that elongates fatty acids with 12, 14 and 16 carbons with higher activity toward C16:0 acyl-CoAs. Catalyzes the synthesis of unsaturated C16 long chain fatty acids and, to a lesser extent, C18:0 and those with low desaturation degree. May participate in the production of saturated and monounsaturated VLCFAs of different chain lengths that are involved in multiple biological processes as precursors of membrane lipids and lipid mediators.</text>
</comment>
<comment type="catalytic activity">
    <reaction evidence="2 3 4 5">
        <text>a very-long-chain acyl-CoA + malonyl-CoA + H(+) = a very-long-chain 3-oxoacyl-CoA + CO2 + CoA</text>
        <dbReference type="Rhea" id="RHEA:32727"/>
        <dbReference type="ChEBI" id="CHEBI:15378"/>
        <dbReference type="ChEBI" id="CHEBI:16526"/>
        <dbReference type="ChEBI" id="CHEBI:57287"/>
        <dbReference type="ChEBI" id="CHEBI:57384"/>
        <dbReference type="ChEBI" id="CHEBI:90725"/>
        <dbReference type="ChEBI" id="CHEBI:90736"/>
        <dbReference type="EC" id="2.3.1.199"/>
    </reaction>
</comment>
<comment type="catalytic activity">
    <reaction evidence="3 4 5">
        <text>hexadecanoyl-CoA + malonyl-CoA + H(+) = 3-oxooctadecanoyl-CoA + CO2 + CoA</text>
        <dbReference type="Rhea" id="RHEA:35315"/>
        <dbReference type="ChEBI" id="CHEBI:15378"/>
        <dbReference type="ChEBI" id="CHEBI:16526"/>
        <dbReference type="ChEBI" id="CHEBI:57287"/>
        <dbReference type="ChEBI" id="CHEBI:57379"/>
        <dbReference type="ChEBI" id="CHEBI:57384"/>
        <dbReference type="ChEBI" id="CHEBI:71407"/>
    </reaction>
    <physiologicalReaction direction="left-to-right" evidence="9">
        <dbReference type="Rhea" id="RHEA:35316"/>
    </physiologicalReaction>
</comment>
<comment type="catalytic activity">
    <reaction evidence="1">
        <text>(9Z)-hexadecenoyl-CoA + malonyl-CoA + H(+) = 3-oxo-(11Z)-octadecenoyl-CoA + CO2 + CoA</text>
        <dbReference type="Rhea" id="RHEA:39675"/>
        <dbReference type="ChEBI" id="CHEBI:15378"/>
        <dbReference type="ChEBI" id="CHEBI:16526"/>
        <dbReference type="ChEBI" id="CHEBI:57287"/>
        <dbReference type="ChEBI" id="CHEBI:57384"/>
        <dbReference type="ChEBI" id="CHEBI:61540"/>
        <dbReference type="ChEBI" id="CHEBI:76555"/>
    </reaction>
    <physiologicalReaction direction="left-to-right" evidence="1">
        <dbReference type="Rhea" id="RHEA:39676"/>
    </physiologicalReaction>
</comment>
<comment type="catalytic activity">
    <reaction evidence="1">
        <text>dodecanoyl-CoA + malonyl-CoA + H(+) = 3-oxotetradecanoyl-CoA + CO2 + CoA</text>
        <dbReference type="Rhea" id="RHEA:60140"/>
        <dbReference type="ChEBI" id="CHEBI:15378"/>
        <dbReference type="ChEBI" id="CHEBI:16526"/>
        <dbReference type="ChEBI" id="CHEBI:57287"/>
        <dbReference type="ChEBI" id="CHEBI:57375"/>
        <dbReference type="ChEBI" id="CHEBI:57384"/>
        <dbReference type="ChEBI" id="CHEBI:62543"/>
    </reaction>
    <physiologicalReaction direction="left-to-right" evidence="1">
        <dbReference type="Rhea" id="RHEA:60141"/>
    </physiologicalReaction>
</comment>
<comment type="catalytic activity">
    <reaction evidence="3">
        <text>tetradecanoyl-CoA + malonyl-CoA + H(+) = 3-oxohexadecanoyl-CoA + CO2 + CoA</text>
        <dbReference type="Rhea" id="RHEA:39167"/>
        <dbReference type="ChEBI" id="CHEBI:15378"/>
        <dbReference type="ChEBI" id="CHEBI:16526"/>
        <dbReference type="ChEBI" id="CHEBI:57287"/>
        <dbReference type="ChEBI" id="CHEBI:57349"/>
        <dbReference type="ChEBI" id="CHEBI:57384"/>
        <dbReference type="ChEBI" id="CHEBI:57385"/>
    </reaction>
    <physiologicalReaction direction="left-to-right" evidence="8">
        <dbReference type="Rhea" id="RHEA:39168"/>
    </physiologicalReaction>
</comment>
<comment type="catalytic activity">
    <reaction evidence="4">
        <text>(9Z)-octadecenoyl-CoA + malonyl-CoA + H(+) = 3-oxo-(11Z)-eicosenoyl-CoA + CO2 + CoA</text>
        <dbReference type="Rhea" id="RHEA:36511"/>
        <dbReference type="ChEBI" id="CHEBI:15378"/>
        <dbReference type="ChEBI" id="CHEBI:16526"/>
        <dbReference type="ChEBI" id="CHEBI:57287"/>
        <dbReference type="ChEBI" id="CHEBI:57384"/>
        <dbReference type="ChEBI" id="CHEBI:57387"/>
        <dbReference type="ChEBI" id="CHEBI:74011"/>
    </reaction>
    <physiologicalReaction direction="left-to-right" evidence="9">
        <dbReference type="Rhea" id="RHEA:36512"/>
    </physiologicalReaction>
</comment>
<comment type="catalytic activity">
    <reaction evidence="4">
        <text>(9Z,12Z)-octadecadienoyl-CoA + malonyl-CoA + H(+) = (11Z,14Z)-3-oxoicosa-11,14-dienoyl-CoA + CO2 + CoA</text>
        <dbReference type="Rhea" id="RHEA:36503"/>
        <dbReference type="ChEBI" id="CHEBI:15378"/>
        <dbReference type="ChEBI" id="CHEBI:16526"/>
        <dbReference type="ChEBI" id="CHEBI:57287"/>
        <dbReference type="ChEBI" id="CHEBI:57383"/>
        <dbReference type="ChEBI" id="CHEBI:57384"/>
        <dbReference type="ChEBI" id="CHEBI:74012"/>
    </reaction>
    <physiologicalReaction direction="left-to-right" evidence="9">
        <dbReference type="Rhea" id="RHEA:36504"/>
    </physiologicalReaction>
</comment>
<comment type="catalytic activity">
    <reaction evidence="4">
        <text>(9Z,12Z,15Z)-octadecatrienoyl-CoA + malonyl-CoA + H(+) = (11Z,14Z,17Z)-3-oxoeicosatrienoyl-CoA + CO2 + CoA</text>
        <dbReference type="Rhea" id="RHEA:36523"/>
        <dbReference type="ChEBI" id="CHEBI:15378"/>
        <dbReference type="ChEBI" id="CHEBI:16526"/>
        <dbReference type="ChEBI" id="CHEBI:57287"/>
        <dbReference type="ChEBI" id="CHEBI:57384"/>
        <dbReference type="ChEBI" id="CHEBI:74034"/>
        <dbReference type="ChEBI" id="CHEBI:74054"/>
    </reaction>
    <physiologicalReaction direction="left-to-right" evidence="9">
        <dbReference type="Rhea" id="RHEA:36524"/>
    </physiologicalReaction>
</comment>
<comment type="activity regulation">
    <text evidence="5">The reaction is stimulated by the presence of HSD17B12, the enzyme catalyzing the second step of the elongation cycle.</text>
</comment>
<comment type="biophysicochemical properties">
    <kinetics>
        <KM evidence="5">1.22 uM for hexadecanoyl-CoA (at 37 degrees Celsius and pH 6.8)</KM>
        <Vmax evidence="5">0.79 pmol/min/ug enzyme with hexadecanoyl-CoA as substrate</Vmax>
    </kinetics>
</comment>
<comment type="pathway">
    <text evidence="2 4">Lipid metabolism; fatty acid biosynthesis.</text>
</comment>
<comment type="interaction">
    <interactant intactId="EBI-12821617">
        <id>Q9H5J4</id>
    </interactant>
    <interactant intactId="EBI-2806151">
        <id>P09601</id>
        <label>HMOX1</label>
    </interactant>
    <organismsDiffer>false</organismsDiffer>
    <experiments>3</experiments>
</comment>
<comment type="interaction">
    <interactant intactId="EBI-12821617">
        <id>Q9H5J4</id>
    </interactant>
    <interactant intactId="EBI-346946">
        <id>Q13094</id>
        <label>LCP2</label>
    </interactant>
    <organismsDiffer>false</organismsDiffer>
    <experiments>3</experiments>
</comment>
<comment type="interaction">
    <interactant intactId="EBI-12821617">
        <id>Q9H5J4</id>
    </interactant>
    <interactant intactId="EBI-10244780">
        <id>Q5QGT7</id>
        <label>RTP2</label>
    </interactant>
    <organismsDiffer>false</organismsDiffer>
    <experiments>3</experiments>
</comment>
<comment type="subcellular location">
    <subcellularLocation>
        <location evidence="2 4">Endoplasmic reticulum membrane</location>
        <topology evidence="2">Multi-pass membrane protein</topology>
    </subcellularLocation>
</comment>
<comment type="tissue specificity">
    <text evidence="4">Ubiquitous.</text>
</comment>
<comment type="PTM">
    <text evidence="2 4 5">N-Glycosylated.</text>
</comment>
<comment type="similarity">
    <text evidence="2">Belongs to the ELO family. ELOVL6 subfamily.</text>
</comment>
<comment type="sequence caution" evidence="7">
    <conflict type="erroneous initiation">
        <sequence resource="EMBL-CDS" id="BAC11225"/>
    </conflict>
</comment>
<feature type="chain" id="PRO_0000282845" description="Very long chain fatty acid elongase 6">
    <location>
        <begin position="1"/>
        <end position="265"/>
    </location>
</feature>
<feature type="transmembrane region" description="Helical" evidence="2">
    <location>
        <begin position="34"/>
        <end position="51"/>
    </location>
</feature>
<feature type="transmembrane region" description="Helical" evidence="2">
    <location>
        <begin position="70"/>
        <end position="90"/>
    </location>
</feature>
<feature type="transmembrane region" description="Helical" evidence="2">
    <location>
        <begin position="111"/>
        <end position="131"/>
    </location>
</feature>
<feature type="transmembrane region" description="Helical" evidence="2">
    <location>
        <begin position="136"/>
        <end position="156"/>
    </location>
</feature>
<feature type="transmembrane region" description="Helical" evidence="2">
    <location>
        <begin position="159"/>
        <end position="179"/>
    </location>
</feature>
<feature type="transmembrane region" description="Helical" evidence="2">
    <location>
        <begin position="197"/>
        <end position="217"/>
    </location>
</feature>
<feature type="transmembrane region" description="Helical" evidence="2">
    <location>
        <begin position="232"/>
        <end position="252"/>
    </location>
</feature>
<feature type="glycosylation site" description="N-linked (GlcNAc...) asparagine" evidence="2">
    <location>
        <position position="2"/>
    </location>
</feature>
<feature type="sequence conflict" description="In Ref. 1; BAC11225." evidence="7" ref="1">
    <original>EY</original>
    <variation>KN</variation>
    <location>
        <begin position="10"/>
        <end position="11"/>
    </location>
</feature>
<keyword id="KW-0256">Endoplasmic reticulum</keyword>
<keyword id="KW-0275">Fatty acid biosynthesis</keyword>
<keyword id="KW-0276">Fatty acid metabolism</keyword>
<keyword id="KW-0325">Glycoprotein</keyword>
<keyword id="KW-0444">Lipid biosynthesis</keyword>
<keyword id="KW-0443">Lipid metabolism</keyword>
<keyword id="KW-0472">Membrane</keyword>
<keyword id="KW-1267">Proteomics identification</keyword>
<keyword id="KW-1185">Reference proteome</keyword>
<keyword id="KW-0808">Transferase</keyword>
<keyword id="KW-0812">Transmembrane</keyword>
<keyword id="KW-1133">Transmembrane helix</keyword>